<reference key="1">
    <citation type="journal article" date="2010" name="Genome Biol.">
        <title>Structure and dynamics of the pan-genome of Streptococcus pneumoniae and closely related species.</title>
        <authorList>
            <person name="Donati C."/>
            <person name="Hiller N.L."/>
            <person name="Tettelin H."/>
            <person name="Muzzi A."/>
            <person name="Croucher N.J."/>
            <person name="Angiuoli S.V."/>
            <person name="Oggioni M."/>
            <person name="Dunning Hotopp J.C."/>
            <person name="Hu F.Z."/>
            <person name="Riley D.R."/>
            <person name="Covacci A."/>
            <person name="Mitchell T.J."/>
            <person name="Bentley S.D."/>
            <person name="Kilian M."/>
            <person name="Ehrlich G.D."/>
            <person name="Rappuoli R."/>
            <person name="Moxon E.R."/>
            <person name="Masignani V."/>
        </authorList>
    </citation>
    <scope>NUCLEOTIDE SEQUENCE [LARGE SCALE GENOMIC DNA]</scope>
    <source>
        <strain>Taiwan19F-14</strain>
    </source>
</reference>
<feature type="chain" id="PRO_1000117035" description="UDP-N-acetylglucosamine--N-acetylmuramyl-(pentapeptide) pyrophosphoryl-undecaprenol N-acetylglucosamine transferase">
    <location>
        <begin position="1"/>
        <end position="352"/>
    </location>
</feature>
<feature type="binding site" evidence="1">
    <location>
        <position position="195"/>
    </location>
    <ligand>
        <name>UDP-N-acetyl-alpha-D-glucosamine</name>
        <dbReference type="ChEBI" id="CHEBI:57705"/>
    </ligand>
</feature>
<feature type="binding site" evidence="1">
    <location>
        <position position="287"/>
    </location>
    <ligand>
        <name>UDP-N-acetyl-alpha-D-glucosamine</name>
        <dbReference type="ChEBI" id="CHEBI:57705"/>
    </ligand>
</feature>
<accession>C1CQG5</accession>
<organism>
    <name type="scientific">Streptococcus pneumoniae (strain Taiwan19F-14)</name>
    <dbReference type="NCBI Taxonomy" id="487213"/>
    <lineage>
        <taxon>Bacteria</taxon>
        <taxon>Bacillati</taxon>
        <taxon>Bacillota</taxon>
        <taxon>Bacilli</taxon>
        <taxon>Lactobacillales</taxon>
        <taxon>Streptococcaceae</taxon>
        <taxon>Streptococcus</taxon>
    </lineage>
</organism>
<protein>
    <recommendedName>
        <fullName evidence="1">UDP-N-acetylglucosamine--N-acetylmuramyl-(pentapeptide) pyrophosphoryl-undecaprenol N-acetylglucosamine transferase</fullName>
        <ecNumber evidence="1">2.4.1.227</ecNumber>
    </recommendedName>
    <alternativeName>
        <fullName evidence="1">Undecaprenyl-PP-MurNAc-pentapeptide-UDPGlcNAc GlcNAc transferase</fullName>
    </alternativeName>
</protein>
<evidence type="ECO:0000255" key="1">
    <source>
        <dbReference type="HAMAP-Rule" id="MF_00033"/>
    </source>
</evidence>
<gene>
    <name evidence="1" type="primary">murG</name>
    <name type="ordered locus">SPT_0711</name>
</gene>
<sequence>MKKIVFTGGGTVGHVTLNLLLMPKFIEDGWEVHYIGDKRGIEHQEILKSGLDVTFHSIATGKLRRYFSWQNMLDVFKVGWGIVQSLFIMLRLRPQTLFSKGGFVSVPPVIAARVSGVPVFIHESDLSMGLANKIAYKFATKMYSTFEQASSLSKVEHVGAVTKVSDQKNPEPDELVDIQSHFNHKLPTVLFVGGSAGARVFNQLVTDHKKELTERYNIINLTGDSSLNELSQNLFRVDYVTDLYQPLMELADIVVTRGGANTIFELLAIAKLHVIVPLGREASRGDQIENAAYFVKKGYAEDLQESDLTLDSLEEKLSHLLSHKEDYQAKMKASKELKSLADFYQLLKKDLS</sequence>
<dbReference type="EC" id="2.4.1.227" evidence="1"/>
<dbReference type="EMBL" id="CP000921">
    <property type="protein sequence ID" value="ACO23515.1"/>
    <property type="molecule type" value="Genomic_DNA"/>
</dbReference>
<dbReference type="RefSeq" id="WP_000724835.1">
    <property type="nucleotide sequence ID" value="NC_012469.1"/>
</dbReference>
<dbReference type="SMR" id="C1CQG5"/>
<dbReference type="CAZy" id="GT28">
    <property type="family name" value="Glycosyltransferase Family 28"/>
</dbReference>
<dbReference type="KEGG" id="snt:SPT_0711"/>
<dbReference type="HOGENOM" id="CLU_037404_0_0_9"/>
<dbReference type="UniPathway" id="UPA00219"/>
<dbReference type="GO" id="GO:0005886">
    <property type="term" value="C:plasma membrane"/>
    <property type="evidence" value="ECO:0007669"/>
    <property type="project" value="UniProtKB-SubCell"/>
</dbReference>
<dbReference type="GO" id="GO:0050511">
    <property type="term" value="F:undecaprenyldiphospho-muramoylpentapeptide beta-N-acetylglucosaminyltransferase activity"/>
    <property type="evidence" value="ECO:0007669"/>
    <property type="project" value="UniProtKB-UniRule"/>
</dbReference>
<dbReference type="GO" id="GO:0005975">
    <property type="term" value="P:carbohydrate metabolic process"/>
    <property type="evidence" value="ECO:0007669"/>
    <property type="project" value="InterPro"/>
</dbReference>
<dbReference type="GO" id="GO:0051301">
    <property type="term" value="P:cell division"/>
    <property type="evidence" value="ECO:0007669"/>
    <property type="project" value="UniProtKB-KW"/>
</dbReference>
<dbReference type="GO" id="GO:0071555">
    <property type="term" value="P:cell wall organization"/>
    <property type="evidence" value="ECO:0007669"/>
    <property type="project" value="UniProtKB-KW"/>
</dbReference>
<dbReference type="GO" id="GO:0030259">
    <property type="term" value="P:lipid glycosylation"/>
    <property type="evidence" value="ECO:0007669"/>
    <property type="project" value="UniProtKB-UniRule"/>
</dbReference>
<dbReference type="GO" id="GO:0009252">
    <property type="term" value="P:peptidoglycan biosynthetic process"/>
    <property type="evidence" value="ECO:0007669"/>
    <property type="project" value="UniProtKB-UniRule"/>
</dbReference>
<dbReference type="GO" id="GO:0008360">
    <property type="term" value="P:regulation of cell shape"/>
    <property type="evidence" value="ECO:0007669"/>
    <property type="project" value="UniProtKB-KW"/>
</dbReference>
<dbReference type="CDD" id="cd03785">
    <property type="entry name" value="GT28_MurG"/>
    <property type="match status" value="1"/>
</dbReference>
<dbReference type="Gene3D" id="3.40.50.2000">
    <property type="entry name" value="Glycogen Phosphorylase B"/>
    <property type="match status" value="2"/>
</dbReference>
<dbReference type="HAMAP" id="MF_00033">
    <property type="entry name" value="MurG"/>
    <property type="match status" value="1"/>
</dbReference>
<dbReference type="InterPro" id="IPR006009">
    <property type="entry name" value="GlcNAc_MurG"/>
</dbReference>
<dbReference type="InterPro" id="IPR007235">
    <property type="entry name" value="Glyco_trans_28_C"/>
</dbReference>
<dbReference type="InterPro" id="IPR004276">
    <property type="entry name" value="GlycoTrans_28_N"/>
</dbReference>
<dbReference type="PANTHER" id="PTHR21015:SF27">
    <property type="entry name" value="UDP-N-ACETYLGLUCOSAMINE--N-ACETYLMURAMYL-(PENTAPEPTIDE) PYROPHOSPHORYL-UNDECAPRENOL N-ACETYLGLUCOSAMINE TRANSFERASE"/>
    <property type="match status" value="1"/>
</dbReference>
<dbReference type="PANTHER" id="PTHR21015">
    <property type="entry name" value="UDP-N-ACETYLGLUCOSAMINE--N-ACETYLMURAMYL-(PENTAPEPTIDE) PYROPHOSPHORYL-UNDECAPRENOL N-ACETYLGLUCOSAMINE TRANSFERASE 1"/>
    <property type="match status" value="1"/>
</dbReference>
<dbReference type="Pfam" id="PF04101">
    <property type="entry name" value="Glyco_tran_28_C"/>
    <property type="match status" value="1"/>
</dbReference>
<dbReference type="Pfam" id="PF03033">
    <property type="entry name" value="Glyco_transf_28"/>
    <property type="match status" value="1"/>
</dbReference>
<dbReference type="SUPFAM" id="SSF53756">
    <property type="entry name" value="UDP-Glycosyltransferase/glycogen phosphorylase"/>
    <property type="match status" value="1"/>
</dbReference>
<proteinExistence type="inferred from homology"/>
<keyword id="KW-0131">Cell cycle</keyword>
<keyword id="KW-0132">Cell division</keyword>
<keyword id="KW-1003">Cell membrane</keyword>
<keyword id="KW-0133">Cell shape</keyword>
<keyword id="KW-0961">Cell wall biogenesis/degradation</keyword>
<keyword id="KW-0328">Glycosyltransferase</keyword>
<keyword id="KW-0472">Membrane</keyword>
<keyword id="KW-0573">Peptidoglycan synthesis</keyword>
<keyword id="KW-0808">Transferase</keyword>
<name>MURG_STRZT</name>
<comment type="function">
    <text evidence="1">Cell wall formation. Catalyzes the transfer of a GlcNAc subunit on undecaprenyl-pyrophosphoryl-MurNAc-pentapeptide (lipid intermediate I) to form undecaprenyl-pyrophosphoryl-MurNAc-(pentapeptide)GlcNAc (lipid intermediate II).</text>
</comment>
<comment type="catalytic activity">
    <reaction evidence="1">
        <text>Mur2Ac(oyl-L-Ala-gamma-D-Glu-L-Lys-D-Ala-D-Ala)-di-trans,octa-cis-undecaprenyl diphosphate + UDP-N-acetyl-alpha-D-glucosamine = beta-D-GlcNAc-(1-&gt;4)-Mur2Ac(oyl-L-Ala-gamma-D-Glu-L-Lys-D-Ala-D-Ala)-di-trans,octa-cis-undecaprenyl diphosphate + UDP + H(+)</text>
        <dbReference type="Rhea" id="RHEA:23192"/>
        <dbReference type="ChEBI" id="CHEBI:15378"/>
        <dbReference type="ChEBI" id="CHEBI:57705"/>
        <dbReference type="ChEBI" id="CHEBI:58223"/>
        <dbReference type="ChEBI" id="CHEBI:60032"/>
        <dbReference type="ChEBI" id="CHEBI:60033"/>
        <dbReference type="EC" id="2.4.1.227"/>
    </reaction>
</comment>
<comment type="pathway">
    <text evidence="1">Cell wall biogenesis; peptidoglycan biosynthesis.</text>
</comment>
<comment type="subcellular location">
    <subcellularLocation>
        <location evidence="1">Cell membrane</location>
        <topology evidence="1">Peripheral membrane protein</topology>
        <orientation evidence="1">Cytoplasmic side</orientation>
    </subcellularLocation>
</comment>
<comment type="similarity">
    <text evidence="1">Belongs to the glycosyltransferase 28 family. MurG subfamily.</text>
</comment>